<name>LPXC_PSEA6</name>
<reference key="1">
    <citation type="submission" date="2006-06" db="EMBL/GenBank/DDBJ databases">
        <title>Complete sequence of Pseudoalteromonas atlantica T6c.</title>
        <authorList>
            <consortium name="US DOE Joint Genome Institute"/>
            <person name="Copeland A."/>
            <person name="Lucas S."/>
            <person name="Lapidus A."/>
            <person name="Barry K."/>
            <person name="Detter J.C."/>
            <person name="Glavina del Rio T."/>
            <person name="Hammon N."/>
            <person name="Israni S."/>
            <person name="Dalin E."/>
            <person name="Tice H."/>
            <person name="Pitluck S."/>
            <person name="Saunders E."/>
            <person name="Brettin T."/>
            <person name="Bruce D."/>
            <person name="Han C."/>
            <person name="Tapia R."/>
            <person name="Gilna P."/>
            <person name="Schmutz J."/>
            <person name="Larimer F."/>
            <person name="Land M."/>
            <person name="Hauser L."/>
            <person name="Kyrpides N."/>
            <person name="Kim E."/>
            <person name="Karls A.C."/>
            <person name="Bartlett D."/>
            <person name="Higgins B.P."/>
            <person name="Richardson P."/>
        </authorList>
    </citation>
    <scope>NUCLEOTIDE SEQUENCE [LARGE SCALE GENOMIC DNA]</scope>
    <source>
        <strain>T6c / ATCC BAA-1087</strain>
    </source>
</reference>
<accession>Q15Q23</accession>
<protein>
    <recommendedName>
        <fullName evidence="1">UDP-3-O-acyl-N-acetylglucosamine deacetylase</fullName>
        <shortName evidence="1">UDP-3-O-acyl-GlcNAc deacetylase</shortName>
        <ecNumber evidence="1">3.5.1.108</ecNumber>
    </recommendedName>
    <alternativeName>
        <fullName evidence="1">UDP-3-O-[R-3-hydroxymyristoyl]-N-acetylglucosamine deacetylase</fullName>
    </alternativeName>
</protein>
<dbReference type="EC" id="3.5.1.108" evidence="1"/>
<dbReference type="EMBL" id="CP000388">
    <property type="protein sequence ID" value="ABG42015.1"/>
    <property type="molecule type" value="Genomic_DNA"/>
</dbReference>
<dbReference type="RefSeq" id="WP_011576243.1">
    <property type="nucleotide sequence ID" value="NC_008228.1"/>
</dbReference>
<dbReference type="SMR" id="Q15Q23"/>
<dbReference type="STRING" id="342610.Patl_3513"/>
<dbReference type="KEGG" id="pat:Patl_3513"/>
<dbReference type="eggNOG" id="COG0774">
    <property type="taxonomic scope" value="Bacteria"/>
</dbReference>
<dbReference type="HOGENOM" id="CLU_046528_1_0_6"/>
<dbReference type="OrthoDB" id="9802746at2"/>
<dbReference type="UniPathway" id="UPA00359">
    <property type="reaction ID" value="UER00478"/>
</dbReference>
<dbReference type="Proteomes" id="UP000001981">
    <property type="component" value="Chromosome"/>
</dbReference>
<dbReference type="GO" id="GO:0016020">
    <property type="term" value="C:membrane"/>
    <property type="evidence" value="ECO:0007669"/>
    <property type="project" value="GOC"/>
</dbReference>
<dbReference type="GO" id="GO:0046872">
    <property type="term" value="F:metal ion binding"/>
    <property type="evidence" value="ECO:0007669"/>
    <property type="project" value="UniProtKB-KW"/>
</dbReference>
<dbReference type="GO" id="GO:0103117">
    <property type="term" value="F:UDP-3-O-acyl-N-acetylglucosamine deacetylase activity"/>
    <property type="evidence" value="ECO:0007669"/>
    <property type="project" value="UniProtKB-UniRule"/>
</dbReference>
<dbReference type="GO" id="GO:0009245">
    <property type="term" value="P:lipid A biosynthetic process"/>
    <property type="evidence" value="ECO:0007669"/>
    <property type="project" value="UniProtKB-UniRule"/>
</dbReference>
<dbReference type="Gene3D" id="3.30.230.20">
    <property type="entry name" value="lpxc deacetylase, domain 1"/>
    <property type="match status" value="1"/>
</dbReference>
<dbReference type="Gene3D" id="3.30.1700.10">
    <property type="entry name" value="lpxc deacetylase, domain 2"/>
    <property type="match status" value="1"/>
</dbReference>
<dbReference type="HAMAP" id="MF_00388">
    <property type="entry name" value="LpxC"/>
    <property type="match status" value="1"/>
</dbReference>
<dbReference type="InterPro" id="IPR020568">
    <property type="entry name" value="Ribosomal_Su5_D2-typ_SF"/>
</dbReference>
<dbReference type="InterPro" id="IPR004463">
    <property type="entry name" value="UDP-acyl_GlcNac_deAcase"/>
</dbReference>
<dbReference type="InterPro" id="IPR011334">
    <property type="entry name" value="UDP-acyl_GlcNac_deAcase_C"/>
</dbReference>
<dbReference type="InterPro" id="IPR015870">
    <property type="entry name" value="UDP-acyl_N-AcGlcN_deAcase_N"/>
</dbReference>
<dbReference type="NCBIfam" id="TIGR00325">
    <property type="entry name" value="lpxC"/>
    <property type="match status" value="1"/>
</dbReference>
<dbReference type="PANTHER" id="PTHR33694">
    <property type="entry name" value="UDP-3-O-ACYL-N-ACETYLGLUCOSAMINE DEACETYLASE 1, MITOCHONDRIAL-RELATED"/>
    <property type="match status" value="1"/>
</dbReference>
<dbReference type="PANTHER" id="PTHR33694:SF1">
    <property type="entry name" value="UDP-3-O-ACYL-N-ACETYLGLUCOSAMINE DEACETYLASE 1, MITOCHONDRIAL-RELATED"/>
    <property type="match status" value="1"/>
</dbReference>
<dbReference type="Pfam" id="PF03331">
    <property type="entry name" value="LpxC"/>
    <property type="match status" value="1"/>
</dbReference>
<dbReference type="SUPFAM" id="SSF54211">
    <property type="entry name" value="Ribosomal protein S5 domain 2-like"/>
    <property type="match status" value="2"/>
</dbReference>
<organism>
    <name type="scientific">Pseudoalteromonas atlantica (strain T6c / ATCC BAA-1087)</name>
    <dbReference type="NCBI Taxonomy" id="3042615"/>
    <lineage>
        <taxon>Bacteria</taxon>
        <taxon>Pseudomonadati</taxon>
        <taxon>Pseudomonadota</taxon>
        <taxon>Gammaproteobacteria</taxon>
        <taxon>Alteromonadales</taxon>
        <taxon>Alteromonadaceae</taxon>
        <taxon>Paraglaciecola</taxon>
    </lineage>
</organism>
<keyword id="KW-0378">Hydrolase</keyword>
<keyword id="KW-0441">Lipid A biosynthesis</keyword>
<keyword id="KW-0444">Lipid biosynthesis</keyword>
<keyword id="KW-0443">Lipid metabolism</keyword>
<keyword id="KW-0479">Metal-binding</keyword>
<keyword id="KW-0862">Zinc</keyword>
<proteinExistence type="inferred from homology"/>
<feature type="chain" id="PRO_1000013216" description="UDP-3-O-acyl-N-acetylglucosamine deacetylase">
    <location>
        <begin position="1"/>
        <end position="304"/>
    </location>
</feature>
<feature type="active site" description="Proton donor" evidence="1">
    <location>
        <position position="265"/>
    </location>
</feature>
<feature type="binding site" evidence="1">
    <location>
        <position position="79"/>
    </location>
    <ligand>
        <name>Zn(2+)</name>
        <dbReference type="ChEBI" id="CHEBI:29105"/>
    </ligand>
</feature>
<feature type="binding site" evidence="1">
    <location>
        <position position="238"/>
    </location>
    <ligand>
        <name>Zn(2+)</name>
        <dbReference type="ChEBI" id="CHEBI:29105"/>
    </ligand>
</feature>
<feature type="binding site" evidence="1">
    <location>
        <position position="242"/>
    </location>
    <ligand>
        <name>Zn(2+)</name>
        <dbReference type="ChEBI" id="CHEBI:29105"/>
    </ligand>
</feature>
<gene>
    <name evidence="1" type="primary">lpxC</name>
    <name type="ordered locus">Patl_3513</name>
</gene>
<comment type="function">
    <text evidence="1">Catalyzes the hydrolysis of UDP-3-O-myristoyl-N-acetylglucosamine to form UDP-3-O-myristoylglucosamine and acetate, the committed step in lipid A biosynthesis.</text>
</comment>
<comment type="catalytic activity">
    <reaction evidence="1">
        <text>a UDP-3-O-[(3R)-3-hydroxyacyl]-N-acetyl-alpha-D-glucosamine + H2O = a UDP-3-O-[(3R)-3-hydroxyacyl]-alpha-D-glucosamine + acetate</text>
        <dbReference type="Rhea" id="RHEA:67816"/>
        <dbReference type="ChEBI" id="CHEBI:15377"/>
        <dbReference type="ChEBI" id="CHEBI:30089"/>
        <dbReference type="ChEBI" id="CHEBI:137740"/>
        <dbReference type="ChEBI" id="CHEBI:173225"/>
        <dbReference type="EC" id="3.5.1.108"/>
    </reaction>
</comment>
<comment type="cofactor">
    <cofactor evidence="1">
        <name>Zn(2+)</name>
        <dbReference type="ChEBI" id="CHEBI:29105"/>
    </cofactor>
</comment>
<comment type="pathway">
    <text evidence="1">Glycolipid biosynthesis; lipid IV(A) biosynthesis; lipid IV(A) from (3R)-3-hydroxytetradecanoyl-[acyl-carrier-protein] and UDP-N-acetyl-alpha-D-glucosamine: step 2/6.</text>
</comment>
<comment type="similarity">
    <text evidence="1">Belongs to the LpxC family.</text>
</comment>
<sequence length="304" mass="33542">MIKQRTIKQSVQETGIGLHKGDKVTMTLRPAPANTGIVFRRVDLEPHADIPARAEAVGDTMLCTCITNADGVSISTVEHLASALAGLGIDNIIVEVDSDELPIMDGSASPFIFLLQSVGIEELNAPKQFIKIKKAIKVKDGDKWAELRPHDGFRVDFRIDFDHPAISQTRQHMVLDFDSSSYVDEVSRARTFGFMKDLEYMNANNLALGGSMANAVALDEYRVLNPEGLRYSDEFLKHKILDAIGDLYLGGHSIIGELVAYKTGHGLNNKLLNALLQNQACWEFVSYDNSEELPIRFASPILAN</sequence>
<evidence type="ECO:0000255" key="1">
    <source>
        <dbReference type="HAMAP-Rule" id="MF_00388"/>
    </source>
</evidence>